<keyword id="KW-0028">Amino-acid biosynthesis</keyword>
<keyword id="KW-0067">ATP-binding</keyword>
<keyword id="KW-0963">Cytoplasm</keyword>
<keyword id="KW-0418">Kinase</keyword>
<keyword id="KW-0547">Nucleotide-binding</keyword>
<keyword id="KW-1185">Reference proteome</keyword>
<keyword id="KW-0791">Threonine biosynthesis</keyword>
<keyword id="KW-0808">Transferase</keyword>
<comment type="function">
    <text evidence="1">Catalyzes the ATP-dependent phosphorylation of L-homoserine to L-homoserine phosphate.</text>
</comment>
<comment type="catalytic activity">
    <reaction evidence="1">
        <text>L-homoserine + ATP = O-phospho-L-homoserine + ADP + H(+)</text>
        <dbReference type="Rhea" id="RHEA:13985"/>
        <dbReference type="ChEBI" id="CHEBI:15378"/>
        <dbReference type="ChEBI" id="CHEBI:30616"/>
        <dbReference type="ChEBI" id="CHEBI:57476"/>
        <dbReference type="ChEBI" id="CHEBI:57590"/>
        <dbReference type="ChEBI" id="CHEBI:456216"/>
        <dbReference type="EC" id="2.7.1.39"/>
    </reaction>
</comment>
<comment type="pathway">
    <text evidence="1">Amino-acid biosynthesis; L-threonine biosynthesis; L-threonine from L-aspartate: step 4/5.</text>
</comment>
<comment type="subcellular location">
    <subcellularLocation>
        <location evidence="1">Cytoplasm</location>
    </subcellularLocation>
</comment>
<comment type="similarity">
    <text evidence="1">Belongs to the GHMP kinase family. Homoserine kinase subfamily.</text>
</comment>
<accession>P65226</accession>
<accession>Q8XGP5</accession>
<evidence type="ECO:0000255" key="1">
    <source>
        <dbReference type="HAMAP-Rule" id="MF_00384"/>
    </source>
</evidence>
<organism>
    <name type="scientific">Salmonella typhimurium (strain LT2 / SGSC1412 / ATCC 700720)</name>
    <dbReference type="NCBI Taxonomy" id="99287"/>
    <lineage>
        <taxon>Bacteria</taxon>
        <taxon>Pseudomonadati</taxon>
        <taxon>Pseudomonadota</taxon>
        <taxon>Gammaproteobacteria</taxon>
        <taxon>Enterobacterales</taxon>
        <taxon>Enterobacteriaceae</taxon>
        <taxon>Salmonella</taxon>
    </lineage>
</organism>
<name>KHSE_SALTY</name>
<proteinExistence type="inferred from homology"/>
<reference key="1">
    <citation type="journal article" date="2001" name="Nature">
        <title>Complete genome sequence of Salmonella enterica serovar Typhimurium LT2.</title>
        <authorList>
            <person name="McClelland M."/>
            <person name="Sanderson K.E."/>
            <person name="Spieth J."/>
            <person name="Clifton S.W."/>
            <person name="Latreille P."/>
            <person name="Courtney L."/>
            <person name="Porwollik S."/>
            <person name="Ali J."/>
            <person name="Dante M."/>
            <person name="Du F."/>
            <person name="Hou S."/>
            <person name="Layman D."/>
            <person name="Leonard S."/>
            <person name="Nguyen C."/>
            <person name="Scott K."/>
            <person name="Holmes A."/>
            <person name="Grewal N."/>
            <person name="Mulvaney E."/>
            <person name="Ryan E."/>
            <person name="Sun H."/>
            <person name="Florea L."/>
            <person name="Miller W."/>
            <person name="Stoneking T."/>
            <person name="Nhan M."/>
            <person name="Waterston R."/>
            <person name="Wilson R.K."/>
        </authorList>
    </citation>
    <scope>NUCLEOTIDE SEQUENCE [LARGE SCALE GENOMIC DNA]</scope>
    <source>
        <strain>LT2 / SGSC1412 / ATCC 700720</strain>
    </source>
</reference>
<feature type="chain" id="PRO_0000156601" description="Homoserine kinase">
    <location>
        <begin position="1"/>
        <end position="309"/>
    </location>
</feature>
<feature type="binding site" evidence="1">
    <location>
        <begin position="91"/>
        <end position="101"/>
    </location>
    <ligand>
        <name>ATP</name>
        <dbReference type="ChEBI" id="CHEBI:30616"/>
    </ligand>
</feature>
<sequence>MVKVYAPASSANMSVGFDVLGAAVTPVDGTLLGDVVSVEAADHFRLHNLGRFADKLPPEPRENIVYQCWERFCQALGKTIPVAMTLEKNMPIGSGLGSSACSVVAALVAMNEHCGKPLNDTRLLALMGELEGRISGSIHYDNVAPCFLGGMQLMIEENGIISQQVPGFDEWLWVLAYPGIKVSTAEARAILPAQYRRQDCIAHGRHLAGFIHACYSRQPQLAAALMKDVIAEPYRARLLPGFSQARQAVSEIGALASGISGSGPTLFALCDKPETAQRVADWLSKHYLQNQEGFVHICRLDTAGARVVG</sequence>
<protein>
    <recommendedName>
        <fullName evidence="1">Homoserine kinase</fullName>
        <shortName evidence="1">HK</shortName>
        <shortName evidence="1">HSK</shortName>
        <ecNumber evidence="1">2.7.1.39</ecNumber>
    </recommendedName>
</protein>
<gene>
    <name evidence="1" type="primary">thrB</name>
    <name type="ordered locus">STM0003</name>
</gene>
<dbReference type="EC" id="2.7.1.39" evidence="1"/>
<dbReference type="EMBL" id="AE006468">
    <property type="protein sequence ID" value="AAL18967.1"/>
    <property type="molecule type" value="Genomic_DNA"/>
</dbReference>
<dbReference type="RefSeq" id="NP_459008.1">
    <property type="nucleotide sequence ID" value="NC_003197.2"/>
</dbReference>
<dbReference type="RefSeq" id="WP_000241685.1">
    <property type="nucleotide sequence ID" value="NC_003197.2"/>
</dbReference>
<dbReference type="SMR" id="P65226"/>
<dbReference type="STRING" id="99287.STM0003"/>
<dbReference type="PaxDb" id="99287-STM0003"/>
<dbReference type="GeneID" id="1251521"/>
<dbReference type="KEGG" id="stm:STM0003"/>
<dbReference type="PATRIC" id="fig|99287.12.peg.2"/>
<dbReference type="HOGENOM" id="CLU_041243_1_1_6"/>
<dbReference type="OMA" id="CANRIPH"/>
<dbReference type="PhylomeDB" id="P65226"/>
<dbReference type="BioCyc" id="SENT99287:STM0003-MONOMER"/>
<dbReference type="UniPathway" id="UPA00050">
    <property type="reaction ID" value="UER00064"/>
</dbReference>
<dbReference type="Proteomes" id="UP000001014">
    <property type="component" value="Chromosome"/>
</dbReference>
<dbReference type="GO" id="GO:0005737">
    <property type="term" value="C:cytoplasm"/>
    <property type="evidence" value="ECO:0007669"/>
    <property type="project" value="UniProtKB-SubCell"/>
</dbReference>
<dbReference type="GO" id="GO:0005524">
    <property type="term" value="F:ATP binding"/>
    <property type="evidence" value="ECO:0007669"/>
    <property type="project" value="UniProtKB-UniRule"/>
</dbReference>
<dbReference type="GO" id="GO:0004413">
    <property type="term" value="F:homoserine kinase activity"/>
    <property type="evidence" value="ECO:0007669"/>
    <property type="project" value="UniProtKB-UniRule"/>
</dbReference>
<dbReference type="GO" id="GO:0009088">
    <property type="term" value="P:threonine biosynthetic process"/>
    <property type="evidence" value="ECO:0007669"/>
    <property type="project" value="UniProtKB-UniRule"/>
</dbReference>
<dbReference type="FunFam" id="3.30.230.10:FF:000020">
    <property type="entry name" value="Homoserine kinase"/>
    <property type="match status" value="1"/>
</dbReference>
<dbReference type="FunFam" id="3.30.70.890:FF:000002">
    <property type="entry name" value="Homoserine kinase"/>
    <property type="match status" value="1"/>
</dbReference>
<dbReference type="Gene3D" id="3.30.230.10">
    <property type="match status" value="1"/>
</dbReference>
<dbReference type="Gene3D" id="3.30.70.890">
    <property type="entry name" value="GHMP kinase, C-terminal domain"/>
    <property type="match status" value="1"/>
</dbReference>
<dbReference type="HAMAP" id="MF_00384">
    <property type="entry name" value="Homoser_kinase"/>
    <property type="match status" value="1"/>
</dbReference>
<dbReference type="InterPro" id="IPR013750">
    <property type="entry name" value="GHMP_kinase_C_dom"/>
</dbReference>
<dbReference type="InterPro" id="IPR036554">
    <property type="entry name" value="GHMP_kinase_C_sf"/>
</dbReference>
<dbReference type="InterPro" id="IPR006204">
    <property type="entry name" value="GHMP_kinase_N_dom"/>
</dbReference>
<dbReference type="InterPro" id="IPR006203">
    <property type="entry name" value="GHMP_knse_ATP-bd_CS"/>
</dbReference>
<dbReference type="InterPro" id="IPR000870">
    <property type="entry name" value="Homoserine_kinase"/>
</dbReference>
<dbReference type="InterPro" id="IPR020568">
    <property type="entry name" value="Ribosomal_Su5_D2-typ_SF"/>
</dbReference>
<dbReference type="InterPro" id="IPR014721">
    <property type="entry name" value="Ribsml_uS5_D2-typ_fold_subgr"/>
</dbReference>
<dbReference type="NCBIfam" id="NF002288">
    <property type="entry name" value="PRK01212.1-4"/>
    <property type="match status" value="1"/>
</dbReference>
<dbReference type="NCBIfam" id="TIGR00191">
    <property type="entry name" value="thrB"/>
    <property type="match status" value="1"/>
</dbReference>
<dbReference type="PANTHER" id="PTHR20861:SF1">
    <property type="entry name" value="HOMOSERINE KINASE"/>
    <property type="match status" value="1"/>
</dbReference>
<dbReference type="PANTHER" id="PTHR20861">
    <property type="entry name" value="HOMOSERINE/4-DIPHOSPHOCYTIDYL-2-C-METHYL-D-ERYTHRITOL KINASE"/>
    <property type="match status" value="1"/>
</dbReference>
<dbReference type="Pfam" id="PF08544">
    <property type="entry name" value="GHMP_kinases_C"/>
    <property type="match status" value="1"/>
</dbReference>
<dbReference type="Pfam" id="PF00288">
    <property type="entry name" value="GHMP_kinases_N"/>
    <property type="match status" value="1"/>
</dbReference>
<dbReference type="PIRSF" id="PIRSF000676">
    <property type="entry name" value="Homoser_kin"/>
    <property type="match status" value="1"/>
</dbReference>
<dbReference type="PRINTS" id="PR00958">
    <property type="entry name" value="HOMSERKINASE"/>
</dbReference>
<dbReference type="SUPFAM" id="SSF55060">
    <property type="entry name" value="GHMP Kinase, C-terminal domain"/>
    <property type="match status" value="1"/>
</dbReference>
<dbReference type="SUPFAM" id="SSF54211">
    <property type="entry name" value="Ribosomal protein S5 domain 2-like"/>
    <property type="match status" value="1"/>
</dbReference>
<dbReference type="PROSITE" id="PS00627">
    <property type="entry name" value="GHMP_KINASES_ATP"/>
    <property type="match status" value="1"/>
</dbReference>